<proteinExistence type="evidence at protein level"/>
<protein>
    <recommendedName>
        <fullName>Protein tyrosine phosphatase receptor type C-associated protein</fullName>
        <shortName>PTPRC-associated protein</shortName>
    </recommendedName>
    <alternativeName>
        <fullName>CD45-associated protein</fullName>
        <shortName>CD45-AP</shortName>
    </alternativeName>
    <alternativeName>
        <fullName>LSM-1</fullName>
    </alternativeName>
</protein>
<evidence type="ECO:0000255" key="1"/>
<evidence type="ECO:0000256" key="2">
    <source>
        <dbReference type="SAM" id="MobiDB-lite"/>
    </source>
</evidence>
<evidence type="ECO:0000305" key="3"/>
<evidence type="ECO:0007744" key="4">
    <source>
    </source>
</evidence>
<comment type="subunit">
    <text>Interacts with CD45/PTPRC.</text>
</comment>
<comment type="subcellular location">
    <subcellularLocation>
        <location evidence="3">Membrane</location>
        <topology evidence="3">Single-pass membrane protein</topology>
    </subcellularLocation>
</comment>
<comment type="tissue specificity">
    <text>Leukocyte-specific. Expressed in B- and T-cell lines, in spleen, thymus, and bone marrow of adult mice, and in embryos.</text>
</comment>
<comment type="PTM">
    <text>Phosphorylated on tyrosine residues.</text>
</comment>
<comment type="sequence caution" evidence="3">
    <conflict type="erroneous initiation">
        <sequence resource="EMBL-CDS" id="AAA67166"/>
    </conflict>
</comment>
<name>PTCA_MOUSE</name>
<accession>Q64697</accession>
<gene>
    <name type="primary">Ptprcap</name>
</gene>
<organism>
    <name type="scientific">Mus musculus</name>
    <name type="common">Mouse</name>
    <dbReference type="NCBI Taxonomy" id="10090"/>
    <lineage>
        <taxon>Eukaryota</taxon>
        <taxon>Metazoa</taxon>
        <taxon>Chordata</taxon>
        <taxon>Craniata</taxon>
        <taxon>Vertebrata</taxon>
        <taxon>Euteleostomi</taxon>
        <taxon>Mammalia</taxon>
        <taxon>Eutheria</taxon>
        <taxon>Euarchontoglires</taxon>
        <taxon>Glires</taxon>
        <taxon>Rodentia</taxon>
        <taxon>Myomorpha</taxon>
        <taxon>Muroidea</taxon>
        <taxon>Muridae</taxon>
        <taxon>Murinae</taxon>
        <taxon>Mus</taxon>
        <taxon>Mus</taxon>
    </lineage>
</organism>
<dbReference type="EMBL" id="D10105">
    <property type="protein sequence ID" value="BAA00986.1"/>
    <property type="molecule type" value="mRNA"/>
</dbReference>
<dbReference type="EMBL" id="U03856">
    <property type="protein sequence ID" value="AAA67166.1"/>
    <property type="status" value="ALT_INIT"/>
    <property type="molecule type" value="mRNA"/>
</dbReference>
<dbReference type="EMBL" id="BC013273">
    <property type="protein sequence ID" value="AAH13273.1"/>
    <property type="molecule type" value="mRNA"/>
</dbReference>
<dbReference type="CCDS" id="CCDS37884.1"/>
<dbReference type="PIR" id="S51372">
    <property type="entry name" value="S51372"/>
</dbReference>
<dbReference type="RefSeq" id="NP_058629.2">
    <property type="nucleotide sequence ID" value="NM_016933.3"/>
</dbReference>
<dbReference type="FunCoup" id="Q64697">
    <property type="interactions" value="755"/>
</dbReference>
<dbReference type="IntAct" id="Q64697">
    <property type="interactions" value="5"/>
</dbReference>
<dbReference type="STRING" id="10090.ENSMUSP00000053412"/>
<dbReference type="iPTMnet" id="Q64697"/>
<dbReference type="PhosphoSitePlus" id="Q64697"/>
<dbReference type="SwissPalm" id="Q64697"/>
<dbReference type="jPOST" id="Q64697"/>
<dbReference type="PaxDb" id="10090-ENSMUSP00000053412"/>
<dbReference type="ProteomicsDB" id="291583"/>
<dbReference type="Antibodypedia" id="16508">
    <property type="antibodies" value="114 antibodies from 26 providers"/>
</dbReference>
<dbReference type="DNASU" id="19265"/>
<dbReference type="Ensembl" id="ENSMUST00000061086.9">
    <property type="protein sequence ID" value="ENSMUSP00000053412.9"/>
    <property type="gene ID" value="ENSMUSG00000045826.10"/>
</dbReference>
<dbReference type="GeneID" id="19265"/>
<dbReference type="KEGG" id="mmu:19265"/>
<dbReference type="UCSC" id="uc008fza.1">
    <property type="organism name" value="mouse"/>
</dbReference>
<dbReference type="AGR" id="MGI:97811"/>
<dbReference type="CTD" id="5790"/>
<dbReference type="MGI" id="MGI:97811">
    <property type="gene designation" value="Ptprcap"/>
</dbReference>
<dbReference type="VEuPathDB" id="HostDB:ENSMUSG00000045826"/>
<dbReference type="eggNOG" id="ENOG502SG9X">
    <property type="taxonomic scope" value="Eukaryota"/>
</dbReference>
<dbReference type="GeneTree" id="ENSGT00390000017041"/>
<dbReference type="HOGENOM" id="CLU_1444125_0_0_1"/>
<dbReference type="InParanoid" id="Q64697"/>
<dbReference type="OMA" id="YHPRHLM"/>
<dbReference type="OrthoDB" id="9451766at2759"/>
<dbReference type="PhylomeDB" id="Q64697"/>
<dbReference type="TreeFam" id="TF338317"/>
<dbReference type="BioGRID-ORCS" id="19265">
    <property type="hits" value="3 hits in 75 CRISPR screens"/>
</dbReference>
<dbReference type="ChiTaRS" id="Ptprcap">
    <property type="organism name" value="mouse"/>
</dbReference>
<dbReference type="PRO" id="PR:Q64697"/>
<dbReference type="Proteomes" id="UP000000589">
    <property type="component" value="Chromosome 19"/>
</dbReference>
<dbReference type="RNAct" id="Q64697">
    <property type="molecule type" value="protein"/>
</dbReference>
<dbReference type="Bgee" id="ENSMUSG00000045826">
    <property type="expression patterns" value="Expressed in thymus and 58 other cell types or tissues"/>
</dbReference>
<dbReference type="ExpressionAtlas" id="Q64697">
    <property type="expression patterns" value="baseline and differential"/>
</dbReference>
<dbReference type="GO" id="GO:0005886">
    <property type="term" value="C:plasma membrane"/>
    <property type="evidence" value="ECO:0000266"/>
    <property type="project" value="MGI"/>
</dbReference>
<dbReference type="InterPro" id="IPR016553">
    <property type="entry name" value="PTPRCAP"/>
</dbReference>
<dbReference type="PANTHER" id="PTHR15312">
    <property type="entry name" value="PROTEIN TYROSINE PHOSPHATASE RECEPTOR TYPE C-ASSOCIATED PROTEIN"/>
    <property type="match status" value="1"/>
</dbReference>
<dbReference type="PANTHER" id="PTHR15312:SF1">
    <property type="entry name" value="PROTEIN TYROSINE PHOSPHATASE RECEPTOR TYPE C-ASSOCIATED PROTEIN"/>
    <property type="match status" value="1"/>
</dbReference>
<dbReference type="Pfam" id="PF15713">
    <property type="entry name" value="PTPRCAP"/>
    <property type="match status" value="1"/>
</dbReference>
<dbReference type="PIRSF" id="PIRSF009325">
    <property type="entry name" value="PTPRC-associated_protein"/>
    <property type="match status" value="1"/>
</dbReference>
<reference key="1">
    <citation type="journal article" date="1994" name="FEBS Lett.">
        <title>Isolation of a cDNA clone encoding a novel membrane protein expressed in lymphocytes.</title>
        <authorList>
            <person name="Shimizu Y."/>
            <person name="Ogawa H."/>
            <person name="Oka Y."/>
            <person name="Mizuno R."/>
            <person name="Sakoda S."/>
            <person name="Kishimoto T."/>
            <person name="Sugiyama H."/>
        </authorList>
    </citation>
    <scope>NUCLEOTIDE SEQUENCE [MRNA]</scope>
    <source>
        <strain>BALB/cJ</strain>
        <tissue>Lymphoid tissue</tissue>
    </source>
</reference>
<reference key="2">
    <citation type="journal article" date="1994" name="J. Biol. Chem.">
        <title>Molecular cloning of the CD45-associated 30-kDa protein.</title>
        <authorList>
            <person name="Takeda A."/>
            <person name="Maizel A.L."/>
            <person name="Kitamura K."/>
            <person name="Ohta T."/>
            <person name="Kimura S."/>
        </authorList>
    </citation>
    <scope>NUCLEOTIDE SEQUENCE [MRNA]</scope>
    <source>
        <strain>BALB/cJ</strain>
        <tissue>Blood</tissue>
    </source>
</reference>
<reference key="3">
    <citation type="journal article" date="2004" name="Genome Res.">
        <title>The status, quality, and expansion of the NIH full-length cDNA project: the Mammalian Gene Collection (MGC).</title>
        <authorList>
            <consortium name="The MGC Project Team"/>
        </authorList>
    </citation>
    <scope>NUCLEOTIDE SEQUENCE [LARGE SCALE MRNA]</scope>
    <source>
        <tissue>Colon</tissue>
    </source>
</reference>
<reference key="4">
    <citation type="journal article" date="2010" name="Cell">
        <title>A tissue-specific atlas of mouse protein phosphorylation and expression.</title>
        <authorList>
            <person name="Huttlin E.L."/>
            <person name="Jedrychowski M.P."/>
            <person name="Elias J.E."/>
            <person name="Goswami T."/>
            <person name="Rad R."/>
            <person name="Beausoleil S.A."/>
            <person name="Villen J."/>
            <person name="Haas W."/>
            <person name="Sowa M.E."/>
            <person name="Gygi S.P."/>
        </authorList>
    </citation>
    <scope>PHOSPHORYLATION [LARGE SCALE ANALYSIS] AT SER-99 AND SER-103</scope>
    <scope>IDENTIFICATION BY MASS SPECTROMETRY [LARGE SCALE ANALYSIS]</scope>
    <source>
        <tissue>Lung</tissue>
        <tissue>Spleen</tissue>
    </source>
</reference>
<sequence>MALPGTLRFGVLMALPGALASGADPEDGVGSSVVTIVLLLLLLLLLVTALALAWRRLSHASGGYYHPARLGAALWGHTCRLLWASPAGRWLRARTELESPEESGPPEDEEDAEDFVIDGGPEEAAAKEEEQRCQAEQTRDPRDTDSDGGLGLSSQGPVGSGSSAEALLSDLHAFSGSAAWDDSAGGAGGQGLRVTAL</sequence>
<feature type="chain" id="PRO_0000097088" description="Protein tyrosine phosphatase receptor type C-associated protein">
    <location>
        <begin position="1"/>
        <end position="197"/>
    </location>
</feature>
<feature type="transmembrane region" description="Helical" evidence="1">
    <location>
        <begin position="33"/>
        <end position="53"/>
    </location>
</feature>
<feature type="region of interest" description="Disordered" evidence="2">
    <location>
        <begin position="120"/>
        <end position="164"/>
    </location>
</feature>
<feature type="region of interest" description="Disordered" evidence="2">
    <location>
        <begin position="177"/>
        <end position="197"/>
    </location>
</feature>
<feature type="compositionally biased region" description="Basic and acidic residues" evidence="2">
    <location>
        <begin position="124"/>
        <end position="145"/>
    </location>
</feature>
<feature type="modified residue" description="Phosphoserine" evidence="4">
    <location>
        <position position="99"/>
    </location>
</feature>
<feature type="modified residue" description="Phosphoserine" evidence="4">
    <location>
        <position position="103"/>
    </location>
</feature>
<feature type="sequence conflict" description="In Ref. 2; AAA67166." evidence="3" ref="2">
    <original>R</original>
    <variation>C</variation>
    <location>
        <position position="55"/>
    </location>
</feature>
<keyword id="KW-0472">Membrane</keyword>
<keyword id="KW-0597">Phosphoprotein</keyword>
<keyword id="KW-1185">Reference proteome</keyword>
<keyword id="KW-0812">Transmembrane</keyword>
<keyword id="KW-1133">Transmembrane helix</keyword>